<organism>
    <name type="scientific">Drosophila grimshawi</name>
    <name type="common">Hawaiian fruit fly</name>
    <name type="synonym">Idiomyia grimshawi</name>
    <dbReference type="NCBI Taxonomy" id="7222"/>
    <lineage>
        <taxon>Eukaryota</taxon>
        <taxon>Metazoa</taxon>
        <taxon>Ecdysozoa</taxon>
        <taxon>Arthropoda</taxon>
        <taxon>Hexapoda</taxon>
        <taxon>Insecta</taxon>
        <taxon>Pterygota</taxon>
        <taxon>Neoptera</taxon>
        <taxon>Endopterygota</taxon>
        <taxon>Diptera</taxon>
        <taxon>Brachycera</taxon>
        <taxon>Muscomorpha</taxon>
        <taxon>Ephydroidea</taxon>
        <taxon>Drosophilidae</taxon>
        <taxon>Drosophila</taxon>
        <taxon>Hawaiian Drosophila</taxon>
    </lineage>
</organism>
<name>ADH_DROGR</name>
<evidence type="ECO:0000250" key="1"/>
<evidence type="ECO:0000255" key="2">
    <source>
        <dbReference type="PROSITE-ProRule" id="PRU10001"/>
    </source>
</evidence>
<evidence type="ECO:0000305" key="3"/>
<protein>
    <recommendedName>
        <fullName>Alcohol dehydrogenase</fullName>
        <ecNumber>1.1.1.1</ecNumber>
    </recommendedName>
</protein>
<gene>
    <name type="primary">Adh</name>
    <name type="ORF">GH13025</name>
</gene>
<proteinExistence type="inferred from homology"/>
<keyword id="KW-0520">NAD</keyword>
<keyword id="KW-0560">Oxidoreductase</keyword>
<keyword id="KW-1185">Reference proteome</keyword>
<feature type="initiator methionine" description="Removed" evidence="1">
    <location>
        <position position="1"/>
    </location>
</feature>
<feature type="chain" id="PRO_0000054462" description="Alcohol dehydrogenase">
    <location>
        <begin position="2"/>
        <end position="254"/>
    </location>
</feature>
<feature type="active site" description="Proton acceptor" evidence="2">
    <location>
        <position position="151"/>
    </location>
</feature>
<feature type="binding site" evidence="1">
    <location>
        <begin position="10"/>
        <end position="33"/>
    </location>
    <ligand>
        <name>NAD(+)</name>
        <dbReference type="ChEBI" id="CHEBI:57540"/>
    </ligand>
</feature>
<feature type="binding site" evidence="1">
    <location>
        <position position="138"/>
    </location>
    <ligand>
        <name>substrate</name>
    </ligand>
</feature>
<dbReference type="EC" id="1.1.1.1"/>
<dbReference type="EMBL" id="U48714">
    <property type="protein sequence ID" value="AAB40357.1"/>
    <property type="molecule type" value="Genomic_DNA"/>
</dbReference>
<dbReference type="EMBL" id="CH916372">
    <property type="protein sequence ID" value="EDV99435.1"/>
    <property type="molecule type" value="Genomic_DNA"/>
</dbReference>
<dbReference type="SMR" id="P51551"/>
<dbReference type="FunCoup" id="P51551">
    <property type="interactions" value="301"/>
</dbReference>
<dbReference type="STRING" id="7222.P51551"/>
<dbReference type="EnsemblMetazoa" id="FBtr0148439">
    <property type="protein sequence ID" value="FBpp0146931"/>
    <property type="gene ID" value="FBgn0012316"/>
</dbReference>
<dbReference type="EnsemblMetazoa" id="XM_001993474.3">
    <property type="protein sequence ID" value="XP_001993510.1"/>
    <property type="gene ID" value="LOC6567072"/>
</dbReference>
<dbReference type="GeneID" id="6567072"/>
<dbReference type="KEGG" id="dgr:6567072"/>
<dbReference type="eggNOG" id="KOG4169">
    <property type="taxonomic scope" value="Eukaryota"/>
</dbReference>
<dbReference type="HOGENOM" id="CLU_010194_2_16_1"/>
<dbReference type="InParanoid" id="P51551"/>
<dbReference type="OMA" id="WSKHWDS"/>
<dbReference type="OrthoDB" id="417891at2759"/>
<dbReference type="PhylomeDB" id="P51551"/>
<dbReference type="ChiTaRS" id="Adh">
    <property type="organism name" value="fly"/>
</dbReference>
<dbReference type="Proteomes" id="UP000001070">
    <property type="component" value="Unassembled WGS sequence"/>
</dbReference>
<dbReference type="GO" id="GO:0005737">
    <property type="term" value="C:cytoplasm"/>
    <property type="evidence" value="ECO:0007669"/>
    <property type="project" value="TreeGrafter"/>
</dbReference>
<dbReference type="GO" id="GO:0004022">
    <property type="term" value="F:alcohol dehydrogenase (NAD+) activity"/>
    <property type="evidence" value="ECO:0000250"/>
    <property type="project" value="UniProtKB"/>
</dbReference>
<dbReference type="GO" id="GO:0006066">
    <property type="term" value="P:alcohol metabolic process"/>
    <property type="evidence" value="ECO:0007669"/>
    <property type="project" value="InterPro"/>
</dbReference>
<dbReference type="CDD" id="cd05323">
    <property type="entry name" value="ADH_SDR_c_like"/>
    <property type="match status" value="1"/>
</dbReference>
<dbReference type="FunFam" id="3.40.50.720:FF:000302">
    <property type="entry name" value="Alcohol dehydrogenase"/>
    <property type="match status" value="1"/>
</dbReference>
<dbReference type="Gene3D" id="3.40.50.720">
    <property type="entry name" value="NAD(P)-binding Rossmann-like Domain"/>
    <property type="match status" value="1"/>
</dbReference>
<dbReference type="InterPro" id="IPR002425">
    <property type="entry name" value="ADH_Drosophila-type"/>
</dbReference>
<dbReference type="InterPro" id="IPR036291">
    <property type="entry name" value="NAD(P)-bd_dom_sf"/>
</dbReference>
<dbReference type="InterPro" id="IPR020904">
    <property type="entry name" value="Sc_DH/Rdtase_CS"/>
</dbReference>
<dbReference type="InterPro" id="IPR002347">
    <property type="entry name" value="SDR_fam"/>
</dbReference>
<dbReference type="PANTHER" id="PTHR44229">
    <property type="entry name" value="15-HYDROXYPROSTAGLANDIN DEHYDROGENASE [NAD(+)]"/>
    <property type="match status" value="1"/>
</dbReference>
<dbReference type="PANTHER" id="PTHR44229:SF8">
    <property type="entry name" value="ALCOHOL DEHYDROGENASE-RELATED"/>
    <property type="match status" value="1"/>
</dbReference>
<dbReference type="Pfam" id="PF00106">
    <property type="entry name" value="adh_short"/>
    <property type="match status" value="1"/>
</dbReference>
<dbReference type="PRINTS" id="PR01168">
    <property type="entry name" value="ALCDHDRGNASE"/>
</dbReference>
<dbReference type="PRINTS" id="PR01167">
    <property type="entry name" value="INSADHFAMILY"/>
</dbReference>
<dbReference type="PRINTS" id="PR00080">
    <property type="entry name" value="SDRFAMILY"/>
</dbReference>
<dbReference type="SUPFAM" id="SSF51735">
    <property type="entry name" value="NAD(P)-binding Rossmann-fold domains"/>
    <property type="match status" value="1"/>
</dbReference>
<dbReference type="PROSITE" id="PS00061">
    <property type="entry name" value="ADH_SHORT"/>
    <property type="match status" value="1"/>
</dbReference>
<comment type="catalytic activity">
    <reaction evidence="2">
        <text>a primary alcohol + NAD(+) = an aldehyde + NADH + H(+)</text>
        <dbReference type="Rhea" id="RHEA:10736"/>
        <dbReference type="ChEBI" id="CHEBI:15378"/>
        <dbReference type="ChEBI" id="CHEBI:15734"/>
        <dbReference type="ChEBI" id="CHEBI:17478"/>
        <dbReference type="ChEBI" id="CHEBI:57540"/>
        <dbReference type="ChEBI" id="CHEBI:57945"/>
        <dbReference type="EC" id="1.1.1.1"/>
    </reaction>
</comment>
<comment type="catalytic activity">
    <reaction evidence="2">
        <text>a secondary alcohol + NAD(+) = a ketone + NADH + H(+)</text>
        <dbReference type="Rhea" id="RHEA:10740"/>
        <dbReference type="ChEBI" id="CHEBI:15378"/>
        <dbReference type="ChEBI" id="CHEBI:17087"/>
        <dbReference type="ChEBI" id="CHEBI:35681"/>
        <dbReference type="ChEBI" id="CHEBI:57540"/>
        <dbReference type="ChEBI" id="CHEBI:57945"/>
        <dbReference type="EC" id="1.1.1.1"/>
    </reaction>
</comment>
<comment type="subunit">
    <text>Homodimer.</text>
</comment>
<comment type="similarity">
    <text evidence="3">Belongs to the short-chain dehydrogenases/reductases (SDR) family.</text>
</comment>
<sequence>MVIANSNIIFVAGLGGIGLDTSREIVKSGPKNLVVLDRVDNPAAIAELKALNPKVTITFYPYDVTVPLAETKKLLKTIFDKLKTVDLLINGAGILDDNQIERTIAVNFTGTVNTTTAILDFWDKRKGGPGGVVANICSVTGFNSIYQVPVYSASKAAALSFTTSIAKLAHITGVTAYSINPGITKTVLVHKFNSWLGVEPRVAELLLEHPTQTTLQCAQNFVKAIEANQNGAIWKLDLGRLDAIEWTKHWDSGI</sequence>
<accession>P51551</accession>
<accession>B4JRA5</accession>
<reference key="1">
    <citation type="journal article" date="1996" name="Gene">
        <title>Molecular organization of the alcohol dehydrogenase loci of Drosophila grimshawi and Drosophila hawaiiensis.</title>
        <authorList>
            <person name="Brennan M.D."/>
            <person name="Thorpe P.A."/>
            <person name="Hu J."/>
            <person name="Dickinson W.J."/>
        </authorList>
    </citation>
    <scope>NUCLEOTIDE SEQUENCE [GENOMIC DNA]</scope>
    <source>
        <strain>G1</strain>
    </source>
</reference>
<reference key="2">
    <citation type="journal article" date="2007" name="Nature">
        <title>Evolution of genes and genomes on the Drosophila phylogeny.</title>
        <authorList>
            <consortium name="Drosophila 12 genomes consortium"/>
        </authorList>
    </citation>
    <scope>NUCLEOTIDE SEQUENCE [LARGE SCALE GENOMIC DNA]</scope>
    <source>
        <strain>Tucson 15287-2541.00</strain>
    </source>
</reference>